<proteinExistence type="inferred from homology"/>
<dbReference type="EMBL" id="CP001283">
    <property type="protein sequence ID" value="ACK91896.1"/>
    <property type="molecule type" value="Genomic_DNA"/>
</dbReference>
<dbReference type="KEGG" id="bcu:BCAH820_4913"/>
<dbReference type="HOGENOM" id="CLU_144811_6_0_9"/>
<dbReference type="Proteomes" id="UP000001363">
    <property type="component" value="Chromosome"/>
</dbReference>
<dbReference type="GO" id="GO:0005886">
    <property type="term" value="C:plasma membrane"/>
    <property type="evidence" value="ECO:0007669"/>
    <property type="project" value="UniProtKB-SubCell"/>
</dbReference>
<dbReference type="HAMAP" id="MF_00386">
    <property type="entry name" value="UPF0161_YidD"/>
    <property type="match status" value="1"/>
</dbReference>
<dbReference type="InterPro" id="IPR002696">
    <property type="entry name" value="Membr_insert_effic_factor_YidD"/>
</dbReference>
<dbReference type="NCBIfam" id="TIGR00278">
    <property type="entry name" value="membrane protein insertion efficiency factor YidD"/>
    <property type="match status" value="1"/>
</dbReference>
<dbReference type="PANTHER" id="PTHR33383">
    <property type="entry name" value="MEMBRANE PROTEIN INSERTION EFFICIENCY FACTOR-RELATED"/>
    <property type="match status" value="1"/>
</dbReference>
<dbReference type="PANTHER" id="PTHR33383:SF1">
    <property type="entry name" value="MEMBRANE PROTEIN INSERTION EFFICIENCY FACTOR-RELATED"/>
    <property type="match status" value="1"/>
</dbReference>
<dbReference type="Pfam" id="PF01809">
    <property type="entry name" value="YidD"/>
    <property type="match status" value="1"/>
</dbReference>
<dbReference type="SMART" id="SM01234">
    <property type="entry name" value="Haemolytic"/>
    <property type="match status" value="1"/>
</dbReference>
<feature type="chain" id="PRO_1000122614" description="Putative membrane protein insertion efficiency factor">
    <location>
        <begin position="1"/>
        <end position="78"/>
    </location>
</feature>
<reference key="1">
    <citation type="submission" date="2008-10" db="EMBL/GenBank/DDBJ databases">
        <title>Genome sequence of Bacillus cereus AH820.</title>
        <authorList>
            <person name="Dodson R.J."/>
            <person name="Durkin A.S."/>
            <person name="Rosovitz M.J."/>
            <person name="Rasko D.A."/>
            <person name="Hoffmaster A."/>
            <person name="Ravel J."/>
            <person name="Sutton G."/>
        </authorList>
    </citation>
    <scope>NUCLEOTIDE SEQUENCE [LARGE SCALE GENOMIC DNA]</scope>
    <source>
        <strain>AH820</strain>
    </source>
</reference>
<gene>
    <name type="ordered locus">BCAH820_4913</name>
</gene>
<evidence type="ECO:0000255" key="1">
    <source>
        <dbReference type="HAMAP-Rule" id="MF_00386"/>
    </source>
</evidence>
<organism>
    <name type="scientific">Bacillus cereus (strain AH820)</name>
    <dbReference type="NCBI Taxonomy" id="405535"/>
    <lineage>
        <taxon>Bacteria</taxon>
        <taxon>Bacillati</taxon>
        <taxon>Bacillota</taxon>
        <taxon>Bacilli</taxon>
        <taxon>Bacillales</taxon>
        <taxon>Bacillaceae</taxon>
        <taxon>Bacillus</taxon>
        <taxon>Bacillus cereus group</taxon>
    </lineage>
</organism>
<accession>B7JT58</accession>
<comment type="function">
    <text evidence="1">Could be involved in insertion of integral membrane proteins into the membrane.</text>
</comment>
<comment type="subcellular location">
    <subcellularLocation>
        <location evidence="1">Cell membrane</location>
        <topology evidence="1">Peripheral membrane protein</topology>
        <orientation evidence="1">Cytoplasmic side</orientation>
    </subcellularLocation>
</comment>
<comment type="similarity">
    <text evidence="1">Belongs to the UPF0161 family.</text>
</comment>
<sequence>MKQIFIGIIRFYQKFISPMTPPTCRFYPTCSHYGLEAFQKHGAFKGFWLTCKRILKCHPFHPGGFDPVPDKKDDKVNS</sequence>
<name>YIDD_BACC0</name>
<keyword id="KW-1003">Cell membrane</keyword>
<keyword id="KW-0472">Membrane</keyword>
<protein>
    <recommendedName>
        <fullName evidence="1">Putative membrane protein insertion efficiency factor</fullName>
    </recommendedName>
</protein>